<accession>Q75VN3</accession>
<reference key="1">
    <citation type="journal article" date="2004" name="Comp. Biochem. Physiol.">
        <title>Molecular cloning and characterization of the translationally controlled tumor protein gene in Bombyx mori.</title>
        <authorList>
            <person name="Lee J.M."/>
            <person name="Kusakabe T."/>
            <person name="Kawaguchi Y."/>
            <person name="Miyagawa Y."/>
            <person name="Takahashi M."/>
            <person name="Mon H."/>
            <person name="Nho S.K."/>
            <person name="Koga K."/>
        </authorList>
    </citation>
    <scope>NUCLEOTIDE SEQUENCE [GENOMIC DNA]</scope>
    <source>
        <strain>R06</strain>
    </source>
</reference>
<reference key="2">
    <citation type="submission" date="2005-04" db="EMBL/GenBank/DDBJ databases">
        <title>Molecular cloning and characterization of silkworm translationally controlled tumor protein gene.</title>
        <authorList>
            <person name="Huang J."/>
            <person name="Zhang Y."/>
            <person name="Huang Y."/>
        </authorList>
    </citation>
    <scope>NUCLEOTIDE SEQUENCE [MRNA]</scope>
</reference>
<dbReference type="EMBL" id="AB124799">
    <property type="protein sequence ID" value="BAC99978.1"/>
    <property type="molecule type" value="Genomic_DNA"/>
</dbReference>
<dbReference type="EMBL" id="DQ003481">
    <property type="protein sequence ID" value="AAY21816.1"/>
    <property type="molecule type" value="mRNA"/>
</dbReference>
<dbReference type="RefSeq" id="NP_001037572.1">
    <property type="nucleotide sequence ID" value="NM_001044107.2"/>
</dbReference>
<dbReference type="SMR" id="Q75VN3"/>
<dbReference type="FunCoup" id="Q75VN3">
    <property type="interactions" value="1258"/>
</dbReference>
<dbReference type="STRING" id="7091.Q75VN3"/>
<dbReference type="PaxDb" id="7091-BGIBMGA003073-TA"/>
<dbReference type="EnsemblMetazoa" id="NM_001044107.1">
    <property type="protein sequence ID" value="NP_001037572.1"/>
    <property type="gene ID" value="GeneID_732859"/>
</dbReference>
<dbReference type="GeneID" id="732859"/>
<dbReference type="KEGG" id="bmor:732859"/>
<dbReference type="CTD" id="41341"/>
<dbReference type="eggNOG" id="KOG1727">
    <property type="taxonomic scope" value="Eukaryota"/>
</dbReference>
<dbReference type="HOGENOM" id="CLU_095877_0_1_1"/>
<dbReference type="InParanoid" id="Q75VN3"/>
<dbReference type="OrthoDB" id="168657at7088"/>
<dbReference type="Proteomes" id="UP000005204">
    <property type="component" value="Unassembled WGS sequence"/>
</dbReference>
<dbReference type="GO" id="GO:0005737">
    <property type="term" value="C:cytoplasm"/>
    <property type="evidence" value="ECO:0007669"/>
    <property type="project" value="UniProtKB-SubCell"/>
</dbReference>
<dbReference type="GO" id="GO:0005509">
    <property type="term" value="F:calcium ion binding"/>
    <property type="evidence" value="ECO:0007669"/>
    <property type="project" value="TreeGrafter"/>
</dbReference>
<dbReference type="FunFam" id="2.170.150.10:FF:000002">
    <property type="entry name" value="Translationally-controlled tumor protein homolog"/>
    <property type="match status" value="1"/>
</dbReference>
<dbReference type="Gene3D" id="2.170.150.10">
    <property type="entry name" value="Metal Binding Protein, Guanine Nucleotide Exchange Factor, Chain A"/>
    <property type="match status" value="1"/>
</dbReference>
<dbReference type="InterPro" id="IPR011057">
    <property type="entry name" value="Mss4-like_sf"/>
</dbReference>
<dbReference type="InterPro" id="IPR011323">
    <property type="entry name" value="Mss4/transl-control_tumour"/>
</dbReference>
<dbReference type="InterPro" id="IPR034737">
    <property type="entry name" value="TCTP"/>
</dbReference>
<dbReference type="InterPro" id="IPR018103">
    <property type="entry name" value="Translation_control_tumour_CS"/>
</dbReference>
<dbReference type="InterPro" id="IPR018105">
    <property type="entry name" value="Translational_control_tumour_p"/>
</dbReference>
<dbReference type="PANTHER" id="PTHR11991">
    <property type="entry name" value="TRANSLATIONALLY CONTROLLED TUMOR PROTEIN-RELATED"/>
    <property type="match status" value="1"/>
</dbReference>
<dbReference type="PANTHER" id="PTHR11991:SF0">
    <property type="entry name" value="TRANSLATIONALLY-CONTROLLED TUMOR PROTEIN"/>
    <property type="match status" value="1"/>
</dbReference>
<dbReference type="Pfam" id="PF00838">
    <property type="entry name" value="TCTP"/>
    <property type="match status" value="1"/>
</dbReference>
<dbReference type="PRINTS" id="PR01653">
    <property type="entry name" value="TCTPROTEIN"/>
</dbReference>
<dbReference type="SUPFAM" id="SSF51316">
    <property type="entry name" value="Mss4-like"/>
    <property type="match status" value="1"/>
</dbReference>
<dbReference type="PROSITE" id="PS01002">
    <property type="entry name" value="TCTP_1"/>
    <property type="match status" value="1"/>
</dbReference>
<dbReference type="PROSITE" id="PS01003">
    <property type="entry name" value="TCTP_2"/>
    <property type="match status" value="1"/>
</dbReference>
<dbReference type="PROSITE" id="PS51797">
    <property type="entry name" value="TCTP_3"/>
    <property type="match status" value="1"/>
</dbReference>
<proteinExistence type="evidence at transcript level"/>
<protein>
    <recommendedName>
        <fullName>Translationally-controlled tumor protein homolog</fullName>
        <shortName>TCTP</shortName>
    </recommendedName>
    <alternativeName>
        <fullName>BmTCTP</fullName>
    </alternativeName>
</protein>
<organism>
    <name type="scientific">Bombyx mori</name>
    <name type="common">Silk moth</name>
    <dbReference type="NCBI Taxonomy" id="7091"/>
    <lineage>
        <taxon>Eukaryota</taxon>
        <taxon>Metazoa</taxon>
        <taxon>Ecdysozoa</taxon>
        <taxon>Arthropoda</taxon>
        <taxon>Hexapoda</taxon>
        <taxon>Insecta</taxon>
        <taxon>Pterygota</taxon>
        <taxon>Neoptera</taxon>
        <taxon>Endopterygota</taxon>
        <taxon>Lepidoptera</taxon>
        <taxon>Glossata</taxon>
        <taxon>Ditrysia</taxon>
        <taxon>Bombycoidea</taxon>
        <taxon>Bombycidae</taxon>
        <taxon>Bombycinae</taxon>
        <taxon>Bombyx</taxon>
    </lineage>
</organism>
<keyword id="KW-0106">Calcium</keyword>
<keyword id="KW-0963">Cytoplasm</keyword>
<keyword id="KW-1185">Reference proteome</keyword>
<comment type="function">
    <text evidence="1">Involved in calcium binding and microtubule stabilization.</text>
</comment>
<comment type="subcellular location">
    <subcellularLocation>
        <location evidence="1">Cytoplasm</location>
    </subcellularLocation>
</comment>
<comment type="similarity">
    <text evidence="2">Belongs to the TCTP family.</text>
</comment>
<feature type="chain" id="PRO_0000252307" description="Translationally-controlled tumor protein homolog">
    <location>
        <begin position="1"/>
        <end position="172"/>
    </location>
</feature>
<feature type="domain" description="TCTP" evidence="2">
    <location>
        <begin position="1"/>
        <end position="172"/>
    </location>
</feature>
<name>TCTP_BOMMO</name>
<gene>
    <name type="primary">Tctp</name>
</gene>
<evidence type="ECO:0000250" key="1"/>
<evidence type="ECO:0000255" key="2">
    <source>
        <dbReference type="PROSITE-ProRule" id="PRU01133"/>
    </source>
</evidence>
<sequence>MKIYKDIITGDEMFSDTYKMKLVDEVIYEVTGRLVTRAQGDIQIEGFNPSAEEADEGTDSAVESGVDIVLNHRLVETYAFGDKKSYTLYLKDYMKKLVAKLEEKAPDQVEVFKTNMNKVMKDILGRFKELQFFTGESMDCDGMVAMMEYRDFDGTQIPIMMFFKHGLEEEKF</sequence>